<protein>
    <recommendedName>
        <fullName evidence="1">DNA polymerase IV</fullName>
        <shortName evidence="1">Pol IV</shortName>
        <ecNumber evidence="1">2.7.7.7</ecNumber>
    </recommendedName>
</protein>
<keyword id="KW-0963">Cytoplasm</keyword>
<keyword id="KW-0227">DNA damage</keyword>
<keyword id="KW-0234">DNA repair</keyword>
<keyword id="KW-0235">DNA replication</keyword>
<keyword id="KW-0238">DNA-binding</keyword>
<keyword id="KW-0239">DNA-directed DNA polymerase</keyword>
<keyword id="KW-0460">Magnesium</keyword>
<keyword id="KW-0479">Metal-binding</keyword>
<keyword id="KW-0515">Mutator protein</keyword>
<keyword id="KW-0548">Nucleotidyltransferase</keyword>
<keyword id="KW-0808">Transferase</keyword>
<feature type="chain" id="PRO_1000084915" description="DNA polymerase IV">
    <location>
        <begin position="1"/>
        <end position="352"/>
    </location>
</feature>
<feature type="domain" description="UmuC" evidence="1">
    <location>
        <begin position="6"/>
        <end position="187"/>
    </location>
</feature>
<feature type="active site" evidence="1">
    <location>
        <position position="106"/>
    </location>
</feature>
<feature type="binding site" evidence="1">
    <location>
        <position position="10"/>
    </location>
    <ligand>
        <name>Mg(2+)</name>
        <dbReference type="ChEBI" id="CHEBI:18420"/>
    </ligand>
</feature>
<feature type="binding site" evidence="1">
    <location>
        <position position="105"/>
    </location>
    <ligand>
        <name>Mg(2+)</name>
        <dbReference type="ChEBI" id="CHEBI:18420"/>
    </ligand>
</feature>
<feature type="site" description="Substrate discrimination" evidence="1">
    <location>
        <position position="15"/>
    </location>
</feature>
<organism>
    <name type="scientific">Ectopseudomonas mendocina (strain ymp)</name>
    <name type="common">Pseudomonas mendocina</name>
    <dbReference type="NCBI Taxonomy" id="399739"/>
    <lineage>
        <taxon>Bacteria</taxon>
        <taxon>Pseudomonadati</taxon>
        <taxon>Pseudomonadota</taxon>
        <taxon>Gammaproteobacteria</taxon>
        <taxon>Pseudomonadales</taxon>
        <taxon>Pseudomonadaceae</taxon>
        <taxon>Ectopseudomonas</taxon>
    </lineage>
</organism>
<proteinExistence type="inferred from homology"/>
<name>DPO4_ECTM1</name>
<gene>
    <name evidence="1" type="primary">dinB</name>
    <name type="ordered locus">Pmen_1726</name>
</gene>
<comment type="function">
    <text evidence="1">Poorly processive, error-prone DNA polymerase involved in untargeted mutagenesis. Copies undamaged DNA at stalled replication forks, which arise in vivo from mismatched or misaligned primer ends. These misaligned primers can be extended by PolIV. Exhibits no 3'-5' exonuclease (proofreading) activity. May be involved in translesional synthesis, in conjunction with the beta clamp from PolIII.</text>
</comment>
<comment type="catalytic activity">
    <reaction evidence="1">
        <text>DNA(n) + a 2'-deoxyribonucleoside 5'-triphosphate = DNA(n+1) + diphosphate</text>
        <dbReference type="Rhea" id="RHEA:22508"/>
        <dbReference type="Rhea" id="RHEA-COMP:17339"/>
        <dbReference type="Rhea" id="RHEA-COMP:17340"/>
        <dbReference type="ChEBI" id="CHEBI:33019"/>
        <dbReference type="ChEBI" id="CHEBI:61560"/>
        <dbReference type="ChEBI" id="CHEBI:173112"/>
        <dbReference type="EC" id="2.7.7.7"/>
    </reaction>
</comment>
<comment type="cofactor">
    <cofactor evidence="1">
        <name>Mg(2+)</name>
        <dbReference type="ChEBI" id="CHEBI:18420"/>
    </cofactor>
    <text evidence="1">Binds 2 magnesium ions per subunit.</text>
</comment>
<comment type="subunit">
    <text evidence="1">Monomer.</text>
</comment>
<comment type="subcellular location">
    <subcellularLocation>
        <location evidence="1">Cytoplasm</location>
    </subcellularLocation>
</comment>
<comment type="similarity">
    <text evidence="1">Belongs to the DNA polymerase type-Y family.</text>
</comment>
<accession>A4XT24</accession>
<reference key="1">
    <citation type="submission" date="2007-04" db="EMBL/GenBank/DDBJ databases">
        <title>Complete sequence of Pseudomonas mendocina ymp.</title>
        <authorList>
            <consortium name="US DOE Joint Genome Institute"/>
            <person name="Copeland A."/>
            <person name="Lucas S."/>
            <person name="Lapidus A."/>
            <person name="Barry K."/>
            <person name="Glavina del Rio T."/>
            <person name="Dalin E."/>
            <person name="Tice H."/>
            <person name="Pitluck S."/>
            <person name="Kiss H."/>
            <person name="Brettin T."/>
            <person name="Detter J.C."/>
            <person name="Bruce D."/>
            <person name="Han C."/>
            <person name="Schmutz J."/>
            <person name="Larimer F."/>
            <person name="Land M."/>
            <person name="Hauser L."/>
            <person name="Kyrpides N."/>
            <person name="Mikhailova N."/>
            <person name="Hersman L."/>
            <person name="Dubois J."/>
            <person name="Maurice P."/>
            <person name="Richardson P."/>
        </authorList>
    </citation>
    <scope>NUCLEOTIDE SEQUENCE [LARGE SCALE GENOMIC DNA]</scope>
    <source>
        <strain>ymp</strain>
    </source>
</reference>
<sequence length="352" mass="39840">MKQRKIIHIDCDCFYAAIEMRDDPSLANRPLAVGGSADRRGVIATCNYEARAYGVRSAMSSRHALKLCPDLLIVKPRFEVYRSVSREIHGIFRQFTDLIEPLSLDEAYLDVSDSPHFAGSATRIAQEIRRRVAQELHITVSAGVAPNKFLAKIASDWRKPNGLFVITPDQVDEFVTALPVSKLHGVGKVTADKLTRLGIRTCLDLRDWNKLALVREFGSFGERLWRLAHGIDEREVKVDSRRQSLSVEHTYDQDLPDLQSCLEKLPALLEEMNGRLQRLDASYRPDKPFVKVKFHDFTQTTLEQAGASRDLDSYRQLLASAHARGDKPVRLLGVGVRLHDLRGRQEQLELFA</sequence>
<evidence type="ECO:0000255" key="1">
    <source>
        <dbReference type="HAMAP-Rule" id="MF_01113"/>
    </source>
</evidence>
<dbReference type="EC" id="2.7.7.7" evidence="1"/>
<dbReference type="EMBL" id="CP000680">
    <property type="protein sequence ID" value="ABP84490.1"/>
    <property type="molecule type" value="Genomic_DNA"/>
</dbReference>
<dbReference type="SMR" id="A4XT24"/>
<dbReference type="STRING" id="399739.Pmen_1726"/>
<dbReference type="KEGG" id="pmy:Pmen_1726"/>
<dbReference type="PATRIC" id="fig|399739.8.peg.1750"/>
<dbReference type="eggNOG" id="COG0389">
    <property type="taxonomic scope" value="Bacteria"/>
</dbReference>
<dbReference type="HOGENOM" id="CLU_012348_1_2_6"/>
<dbReference type="OrthoDB" id="9808813at2"/>
<dbReference type="GO" id="GO:0005829">
    <property type="term" value="C:cytosol"/>
    <property type="evidence" value="ECO:0007669"/>
    <property type="project" value="TreeGrafter"/>
</dbReference>
<dbReference type="GO" id="GO:0003684">
    <property type="term" value="F:damaged DNA binding"/>
    <property type="evidence" value="ECO:0007669"/>
    <property type="project" value="InterPro"/>
</dbReference>
<dbReference type="GO" id="GO:0003887">
    <property type="term" value="F:DNA-directed DNA polymerase activity"/>
    <property type="evidence" value="ECO:0007669"/>
    <property type="project" value="UniProtKB-UniRule"/>
</dbReference>
<dbReference type="GO" id="GO:0000287">
    <property type="term" value="F:magnesium ion binding"/>
    <property type="evidence" value="ECO:0007669"/>
    <property type="project" value="UniProtKB-UniRule"/>
</dbReference>
<dbReference type="GO" id="GO:0006261">
    <property type="term" value="P:DNA-templated DNA replication"/>
    <property type="evidence" value="ECO:0007669"/>
    <property type="project" value="UniProtKB-UniRule"/>
</dbReference>
<dbReference type="GO" id="GO:0042276">
    <property type="term" value="P:error-prone translesion synthesis"/>
    <property type="evidence" value="ECO:0007669"/>
    <property type="project" value="TreeGrafter"/>
</dbReference>
<dbReference type="GO" id="GO:0009432">
    <property type="term" value="P:SOS response"/>
    <property type="evidence" value="ECO:0007669"/>
    <property type="project" value="TreeGrafter"/>
</dbReference>
<dbReference type="CDD" id="cd03586">
    <property type="entry name" value="PolY_Pol_IV_kappa"/>
    <property type="match status" value="1"/>
</dbReference>
<dbReference type="FunFam" id="1.10.150.20:FF:000019">
    <property type="entry name" value="DNA polymerase IV"/>
    <property type="match status" value="1"/>
</dbReference>
<dbReference type="FunFam" id="3.30.70.270:FF:000002">
    <property type="entry name" value="DNA polymerase IV"/>
    <property type="match status" value="1"/>
</dbReference>
<dbReference type="FunFam" id="3.40.1170.60:FF:000001">
    <property type="entry name" value="DNA polymerase IV"/>
    <property type="match status" value="1"/>
</dbReference>
<dbReference type="Gene3D" id="3.30.70.270">
    <property type="match status" value="1"/>
</dbReference>
<dbReference type="Gene3D" id="3.40.1170.60">
    <property type="match status" value="1"/>
</dbReference>
<dbReference type="Gene3D" id="1.10.150.20">
    <property type="entry name" value="5' to 3' exonuclease, C-terminal subdomain"/>
    <property type="match status" value="1"/>
</dbReference>
<dbReference type="Gene3D" id="3.30.1490.100">
    <property type="entry name" value="DNA polymerase, Y-family, little finger domain"/>
    <property type="match status" value="1"/>
</dbReference>
<dbReference type="HAMAP" id="MF_01113">
    <property type="entry name" value="DNApol_IV"/>
    <property type="match status" value="1"/>
</dbReference>
<dbReference type="InterPro" id="IPR043502">
    <property type="entry name" value="DNA/RNA_pol_sf"/>
</dbReference>
<dbReference type="InterPro" id="IPR036775">
    <property type="entry name" value="DNA_pol_Y-fam_lit_finger_sf"/>
</dbReference>
<dbReference type="InterPro" id="IPR017961">
    <property type="entry name" value="DNA_pol_Y-fam_little_finger"/>
</dbReference>
<dbReference type="InterPro" id="IPR050116">
    <property type="entry name" value="DNA_polymerase-Y"/>
</dbReference>
<dbReference type="InterPro" id="IPR022880">
    <property type="entry name" value="DNApol_IV"/>
</dbReference>
<dbReference type="InterPro" id="IPR053848">
    <property type="entry name" value="IMS_HHH_1"/>
</dbReference>
<dbReference type="InterPro" id="IPR043128">
    <property type="entry name" value="Rev_trsase/Diguanyl_cyclase"/>
</dbReference>
<dbReference type="InterPro" id="IPR001126">
    <property type="entry name" value="UmuC"/>
</dbReference>
<dbReference type="NCBIfam" id="NF002677">
    <property type="entry name" value="PRK02406.1"/>
    <property type="match status" value="1"/>
</dbReference>
<dbReference type="PANTHER" id="PTHR11076:SF33">
    <property type="entry name" value="DNA POLYMERASE KAPPA"/>
    <property type="match status" value="1"/>
</dbReference>
<dbReference type="PANTHER" id="PTHR11076">
    <property type="entry name" value="DNA REPAIR POLYMERASE UMUC / TRANSFERASE FAMILY MEMBER"/>
    <property type="match status" value="1"/>
</dbReference>
<dbReference type="Pfam" id="PF00817">
    <property type="entry name" value="IMS"/>
    <property type="match status" value="1"/>
</dbReference>
<dbReference type="Pfam" id="PF11799">
    <property type="entry name" value="IMS_C"/>
    <property type="match status" value="1"/>
</dbReference>
<dbReference type="Pfam" id="PF21999">
    <property type="entry name" value="IMS_HHH_1"/>
    <property type="match status" value="1"/>
</dbReference>
<dbReference type="SUPFAM" id="SSF56672">
    <property type="entry name" value="DNA/RNA polymerases"/>
    <property type="match status" value="1"/>
</dbReference>
<dbReference type="SUPFAM" id="SSF100879">
    <property type="entry name" value="Lesion bypass DNA polymerase (Y-family), little finger domain"/>
    <property type="match status" value="1"/>
</dbReference>
<dbReference type="PROSITE" id="PS50173">
    <property type="entry name" value="UMUC"/>
    <property type="match status" value="1"/>
</dbReference>